<gene>
    <name type="primary">splA</name>
    <name type="ordered locus">SAOUHSC_01942</name>
</gene>
<protein>
    <recommendedName>
        <fullName>Serine protease SplA</fullName>
        <ecNumber>3.4.21.-</ecNumber>
    </recommendedName>
</protein>
<keyword id="KW-0002">3D-structure</keyword>
<keyword id="KW-0903">Direct protein sequencing</keyword>
<keyword id="KW-0378">Hydrolase</keyword>
<keyword id="KW-0645">Protease</keyword>
<keyword id="KW-1185">Reference proteome</keyword>
<keyword id="KW-0964">Secreted</keyword>
<keyword id="KW-0720">Serine protease</keyword>
<keyword id="KW-0732">Signal</keyword>
<feature type="signal peptide" evidence="2">
    <location>
        <begin position="1"/>
        <end position="35"/>
    </location>
</feature>
<feature type="chain" id="PRO_0000359533" description="Serine protease SplA">
    <location>
        <begin position="36"/>
        <end position="235"/>
    </location>
</feature>
<feature type="active site" description="Charge relay system" evidence="1">
    <location>
        <position position="74"/>
    </location>
</feature>
<feature type="active site" description="Charge relay system" evidence="1">
    <location>
        <position position="113"/>
    </location>
</feature>
<feature type="active site" description="Charge relay system" evidence="1">
    <location>
        <position position="189"/>
    </location>
</feature>
<feature type="strand" evidence="4">
    <location>
        <begin position="39"/>
        <end position="43"/>
    </location>
</feature>
<feature type="helix" evidence="4">
    <location>
        <begin position="50"/>
        <end position="52"/>
    </location>
</feature>
<feature type="strand" evidence="4">
    <location>
        <begin position="53"/>
        <end position="56"/>
    </location>
</feature>
<feature type="strand" evidence="4">
    <location>
        <begin position="59"/>
        <end position="65"/>
    </location>
</feature>
<feature type="strand" evidence="4">
    <location>
        <begin position="68"/>
        <end position="71"/>
    </location>
</feature>
<feature type="helix" evidence="4">
    <location>
        <begin position="73"/>
        <end position="82"/>
    </location>
</feature>
<feature type="strand" evidence="4">
    <location>
        <begin position="86"/>
        <end position="89"/>
    </location>
</feature>
<feature type="strand" evidence="4">
    <location>
        <begin position="92"/>
        <end position="94"/>
    </location>
</feature>
<feature type="strand" evidence="4">
    <location>
        <begin position="102"/>
        <end position="107"/>
    </location>
</feature>
<feature type="strand" evidence="4">
    <location>
        <begin position="109"/>
        <end position="113"/>
    </location>
</feature>
<feature type="strand" evidence="4">
    <location>
        <begin position="115"/>
        <end position="119"/>
    </location>
</feature>
<feature type="helix" evidence="4">
    <location>
        <begin position="129"/>
        <end position="132"/>
    </location>
</feature>
<feature type="strand" evidence="4">
    <location>
        <begin position="147"/>
        <end position="152"/>
    </location>
</feature>
<feature type="helix" evidence="4">
    <location>
        <begin position="156"/>
        <end position="158"/>
    </location>
</feature>
<feature type="strand" evidence="4">
    <location>
        <begin position="163"/>
        <end position="174"/>
    </location>
</feature>
<feature type="strand" evidence="4">
    <location>
        <begin position="177"/>
        <end position="180"/>
    </location>
</feature>
<feature type="strand" evidence="4">
    <location>
        <begin position="192"/>
        <end position="194"/>
    </location>
</feature>
<feature type="strand" evidence="4">
    <location>
        <begin position="200"/>
        <end position="207"/>
    </location>
</feature>
<feature type="strand" evidence="4">
    <location>
        <begin position="215"/>
        <end position="220"/>
    </location>
</feature>
<feature type="helix" evidence="4">
    <location>
        <begin position="223"/>
        <end position="231"/>
    </location>
</feature>
<sequence>MNKNVMVKGLTALTILTSLGFAENISNQPHSIAKAEKNVKEITDATKEPYNSVVAFVGGTGVVVGKNTIVTNKHIAKSNDIFKNRVSAHHSSKGKGGGNYDVKDIVEYPGKEDLAIVHVHETSTEGLNFNKNVSYTKFADGAKVKDRISVIGYPKGAQTKYKMFESTGTINHISGTFMEFDAYAQPGNSGSPVLNSKHELIGILYAGSGKDESEKNFGVYFTPQLKEFIQNNIEK</sequence>
<accession>Q2FXC2</accession>
<accession>Q9KH51</accession>
<organism>
    <name type="scientific">Staphylococcus aureus (strain NCTC 8325 / PS 47)</name>
    <dbReference type="NCBI Taxonomy" id="93061"/>
    <lineage>
        <taxon>Bacteria</taxon>
        <taxon>Bacillati</taxon>
        <taxon>Bacillota</taxon>
        <taxon>Bacilli</taxon>
        <taxon>Bacillales</taxon>
        <taxon>Staphylococcaceae</taxon>
        <taxon>Staphylococcus</taxon>
    </lineage>
</organism>
<comment type="subcellular location">
    <subcellularLocation>
        <location evidence="2">Secreted</location>
    </subcellularLocation>
</comment>
<comment type="developmental stage">
    <text evidence="2">Maximally expressed during early stationary phase.</text>
</comment>
<comment type="induction">
    <text evidence="2">Positively regulated by agr (accessory gene regulator).</text>
</comment>
<comment type="similarity">
    <text evidence="3">Belongs to the peptidase S1B family.</text>
</comment>
<proteinExistence type="evidence at protein level"/>
<dbReference type="EC" id="3.4.21.-"/>
<dbReference type="EMBL" id="AF271715">
    <property type="protein sequence ID" value="AAF97925.1"/>
    <property type="molecule type" value="Genomic_DNA"/>
</dbReference>
<dbReference type="EMBL" id="CP000253">
    <property type="protein sequence ID" value="ABD31004.1"/>
    <property type="molecule type" value="Genomic_DNA"/>
</dbReference>
<dbReference type="RefSeq" id="WP_001039435.1">
    <property type="nucleotide sequence ID" value="NZ_LS483365.1"/>
</dbReference>
<dbReference type="RefSeq" id="YP_500442.1">
    <property type="nucleotide sequence ID" value="NC_007795.1"/>
</dbReference>
<dbReference type="PDB" id="2W7S">
    <property type="method" value="X-ray"/>
    <property type="resolution" value="1.80 A"/>
    <property type="chains" value="A/B/C/D=36-235"/>
</dbReference>
<dbReference type="PDB" id="2W7U">
    <property type="method" value="X-ray"/>
    <property type="resolution" value="2.43 A"/>
    <property type="chains" value="A/B/C/D=36-235"/>
</dbReference>
<dbReference type="PDB" id="3UFA">
    <property type="method" value="X-ray"/>
    <property type="resolution" value="1.80 A"/>
    <property type="chains" value="A/B=36-235"/>
</dbReference>
<dbReference type="PDB" id="4MVN">
    <property type="method" value="X-ray"/>
    <property type="resolution" value="1.70 A"/>
    <property type="chains" value="A/B/C/D=36-235"/>
</dbReference>
<dbReference type="PDBsum" id="2W7S"/>
<dbReference type="PDBsum" id="2W7U"/>
<dbReference type="PDBsum" id="3UFA"/>
<dbReference type="PDBsum" id="4MVN"/>
<dbReference type="SMR" id="Q2FXC2"/>
<dbReference type="STRING" id="93061.SAOUHSC_01942"/>
<dbReference type="MEROPS" id="S01.503"/>
<dbReference type="PaxDb" id="1280-SAXN108_1846"/>
<dbReference type="GeneID" id="3921025"/>
<dbReference type="KEGG" id="sao:SAOUHSC_01942"/>
<dbReference type="PATRIC" id="fig|93061.5.peg.1767"/>
<dbReference type="eggNOG" id="COG3591">
    <property type="taxonomic scope" value="Bacteria"/>
</dbReference>
<dbReference type="HOGENOM" id="CLU_073589_2_0_9"/>
<dbReference type="OrthoDB" id="9766361at2"/>
<dbReference type="EvolutionaryTrace" id="Q2FXC2"/>
<dbReference type="PHI-base" id="PHI:11221"/>
<dbReference type="Proteomes" id="UP000008816">
    <property type="component" value="Chromosome"/>
</dbReference>
<dbReference type="GO" id="GO:0005576">
    <property type="term" value="C:extracellular region"/>
    <property type="evidence" value="ECO:0007669"/>
    <property type="project" value="UniProtKB-SubCell"/>
</dbReference>
<dbReference type="GO" id="GO:0004252">
    <property type="term" value="F:serine-type endopeptidase activity"/>
    <property type="evidence" value="ECO:0007669"/>
    <property type="project" value="InterPro"/>
</dbReference>
<dbReference type="GO" id="GO:0006508">
    <property type="term" value="P:proteolysis"/>
    <property type="evidence" value="ECO:0007669"/>
    <property type="project" value="UniProtKB-KW"/>
</dbReference>
<dbReference type="Gene3D" id="2.40.10.10">
    <property type="entry name" value="Trypsin-like serine proteases"/>
    <property type="match status" value="2"/>
</dbReference>
<dbReference type="InterPro" id="IPR009003">
    <property type="entry name" value="Peptidase_S1_PA"/>
</dbReference>
<dbReference type="InterPro" id="IPR043504">
    <property type="entry name" value="Peptidase_S1_PA_chymotrypsin"/>
</dbReference>
<dbReference type="InterPro" id="IPR008256">
    <property type="entry name" value="Peptidase_S1B"/>
</dbReference>
<dbReference type="InterPro" id="IPR008353">
    <property type="entry name" value="Peptidase_S1B_tx"/>
</dbReference>
<dbReference type="InterPro" id="IPR001254">
    <property type="entry name" value="Trypsin_dom"/>
</dbReference>
<dbReference type="InterPro" id="IPR028301">
    <property type="entry name" value="V8_his_AS"/>
</dbReference>
<dbReference type="PANTHER" id="PTHR43019:SF23">
    <property type="entry name" value="PROTEASE DO-LIKE 5, CHLOROPLASTIC"/>
    <property type="match status" value="1"/>
</dbReference>
<dbReference type="PANTHER" id="PTHR43019">
    <property type="entry name" value="SERINE ENDOPROTEASE DEGS"/>
    <property type="match status" value="1"/>
</dbReference>
<dbReference type="Pfam" id="PF00089">
    <property type="entry name" value="Trypsin"/>
    <property type="match status" value="1"/>
</dbReference>
<dbReference type="PRINTS" id="PR01774">
    <property type="entry name" value="EXFOLTOXIN"/>
</dbReference>
<dbReference type="PRINTS" id="PR00839">
    <property type="entry name" value="V8PROTEASE"/>
</dbReference>
<dbReference type="SUPFAM" id="SSF50494">
    <property type="entry name" value="Trypsin-like serine proteases"/>
    <property type="match status" value="1"/>
</dbReference>
<dbReference type="PROSITE" id="PS00672">
    <property type="entry name" value="V8_HIS"/>
    <property type="match status" value="1"/>
</dbReference>
<reference key="1">
    <citation type="journal article" date="2001" name="Infect. Immun.">
        <title>Molecular characterization of a novel Staphylococcus aureus serine protease operon.</title>
        <authorList>
            <person name="Reed S.B."/>
            <person name="Wesson C.A."/>
            <person name="Liou L.E."/>
            <person name="Trumble W.R."/>
            <person name="Schlievert P.M."/>
            <person name="Bohach G.A."/>
            <person name="Bayles K.W."/>
        </authorList>
    </citation>
    <scope>NUCLEOTIDE SEQUENCE [GENOMIC DNA]</scope>
    <scope>PROTEIN SEQUENCE OF 36-50</scope>
    <scope>SUBCELLULAR LOCATION</scope>
    <scope>DEVELOPMENTAL STAGE</scope>
    <scope>INDUCTION</scope>
</reference>
<reference key="2">
    <citation type="book" date="2006" name="Gram positive pathogens, 2nd edition">
        <title>The Staphylococcus aureus NCTC 8325 genome.</title>
        <editorList>
            <person name="Fischetti V."/>
            <person name="Novick R."/>
            <person name="Ferretti J."/>
            <person name="Portnoy D."/>
            <person name="Rood J."/>
        </editorList>
        <authorList>
            <person name="Gillaspy A.F."/>
            <person name="Worrell V."/>
            <person name="Orvis J."/>
            <person name="Roe B.A."/>
            <person name="Dyer D.W."/>
            <person name="Iandolo J.J."/>
        </authorList>
    </citation>
    <scope>NUCLEOTIDE SEQUENCE [LARGE SCALE GENOMIC DNA]</scope>
    <source>
        <strain>NCTC 8325 / PS 47</strain>
    </source>
</reference>
<evidence type="ECO:0000250" key="1"/>
<evidence type="ECO:0000269" key="2">
    <source>
    </source>
</evidence>
<evidence type="ECO:0000305" key="3"/>
<evidence type="ECO:0007829" key="4">
    <source>
        <dbReference type="PDB" id="4MVN"/>
    </source>
</evidence>
<name>SPLA_STAA8</name>